<protein>
    <recommendedName>
        <fullName>Carbohydrate sulfotransferase 12</fullName>
        <ecNumber>2.8.2.5</ecNumber>
    </recommendedName>
    <alternativeName>
        <fullName>Chondroitin 4-O-sulfotransferase 2</fullName>
    </alternativeName>
    <alternativeName>
        <fullName>Chondroitin 4-sulfotransferase 2</fullName>
        <shortName>C4ST-2</shortName>
        <shortName>C4ST2</shortName>
    </alternativeName>
</protein>
<accession>Q5XHM7</accession>
<accession>Q5HZM5</accession>
<comment type="function">
    <text evidence="1">Catalyzes the transfer of sulfate to position 4 of the N-acetylgalactosamine (GalNAc) residue of chondroitin and desulfated dermatan sulfate. Chondroitin sulfate constitutes the predominant proteoglycan present in cartilage and is distributed on the surfaces of many cells and extracellular matrices (By similarity).</text>
</comment>
<comment type="catalytic activity">
    <reaction>
        <text>chondroitin beta-D-glucuronate + n 3'-phosphoadenylyl sulfate = chondroitin 4'-sulfate + n adenosine 3',5'-bisphosphate + n H(+)</text>
        <dbReference type="Rhea" id="RHEA:16101"/>
        <dbReference type="Rhea" id="RHEA-COMP:9827"/>
        <dbReference type="Rhea" id="RHEA-COMP:9829"/>
        <dbReference type="ChEBI" id="CHEBI:15378"/>
        <dbReference type="ChEBI" id="CHEBI:57652"/>
        <dbReference type="ChEBI" id="CHEBI:58339"/>
        <dbReference type="ChEBI" id="CHEBI:58343"/>
        <dbReference type="ChEBI" id="CHEBI:58422"/>
        <dbReference type="EC" id="2.8.2.5"/>
    </reaction>
</comment>
<comment type="subcellular location">
    <subcellularLocation>
        <location evidence="1">Golgi apparatus membrane</location>
        <topology evidence="1">Single-pass type II membrane protein</topology>
    </subcellularLocation>
</comment>
<comment type="similarity">
    <text evidence="3">Belongs to the sulfotransferase 2 family.</text>
</comment>
<gene>
    <name type="primary">chst12</name>
</gene>
<evidence type="ECO:0000250" key="1"/>
<evidence type="ECO:0000255" key="2"/>
<evidence type="ECO:0000305" key="3"/>
<proteinExistence type="evidence at transcript level"/>
<organism>
    <name type="scientific">Xenopus laevis</name>
    <name type="common">African clawed frog</name>
    <dbReference type="NCBI Taxonomy" id="8355"/>
    <lineage>
        <taxon>Eukaryota</taxon>
        <taxon>Metazoa</taxon>
        <taxon>Chordata</taxon>
        <taxon>Craniata</taxon>
        <taxon>Vertebrata</taxon>
        <taxon>Euteleostomi</taxon>
        <taxon>Amphibia</taxon>
        <taxon>Batrachia</taxon>
        <taxon>Anura</taxon>
        <taxon>Pipoidea</taxon>
        <taxon>Pipidae</taxon>
        <taxon>Xenopodinae</taxon>
        <taxon>Xenopus</taxon>
        <taxon>Xenopus</taxon>
    </lineage>
</organism>
<name>CHSTC_XENLA</name>
<keyword id="KW-0119">Carbohydrate metabolism</keyword>
<keyword id="KW-0325">Glycoprotein</keyword>
<keyword id="KW-0333">Golgi apparatus</keyword>
<keyword id="KW-0472">Membrane</keyword>
<keyword id="KW-1185">Reference proteome</keyword>
<keyword id="KW-0735">Signal-anchor</keyword>
<keyword id="KW-0808">Transferase</keyword>
<keyword id="KW-0812">Transmembrane</keyword>
<keyword id="KW-1133">Transmembrane helix</keyword>
<feature type="chain" id="PRO_0000189670" description="Carbohydrate sulfotransferase 12">
    <location>
        <begin position="1"/>
        <end position="420"/>
    </location>
</feature>
<feature type="topological domain" description="Cytoplasmic" evidence="2">
    <location>
        <begin position="1"/>
        <end position="5"/>
    </location>
</feature>
<feature type="transmembrane region" description="Helical; Signal-anchor for type II membrane protein" evidence="2">
    <location>
        <begin position="6"/>
        <end position="26"/>
    </location>
</feature>
<feature type="topological domain" description="Lumenal" evidence="2">
    <location>
        <begin position="27"/>
        <end position="420"/>
    </location>
</feature>
<feature type="binding site" evidence="1">
    <location>
        <begin position="176"/>
        <end position="182"/>
    </location>
    <ligand>
        <name>3'-phosphoadenylyl sulfate</name>
        <dbReference type="ChEBI" id="CHEBI:58339"/>
    </ligand>
</feature>
<feature type="binding site" evidence="1">
    <location>
        <begin position="251"/>
        <end position="259"/>
    </location>
    <ligand>
        <name>3'-phosphoadenylyl sulfate</name>
        <dbReference type="ChEBI" id="CHEBI:58339"/>
    </ligand>
</feature>
<feature type="glycosylation site" description="N-linked (GlcNAc...) asparagine" evidence="2">
    <location>
        <position position="76"/>
    </location>
</feature>
<feature type="glycosylation site" description="N-linked (GlcNAc...) asparagine" evidence="2">
    <location>
        <position position="139"/>
    </location>
</feature>
<feature type="glycosylation site" description="N-linked (GlcNAc...) asparagine" evidence="2">
    <location>
        <position position="215"/>
    </location>
</feature>
<feature type="glycosylation site" description="N-linked (GlcNAc...) asparagine" evidence="2">
    <location>
        <position position="286"/>
    </location>
</feature>
<feature type="glycosylation site" description="N-linked (GlcNAc...) asparagine" evidence="2">
    <location>
        <position position="376"/>
    </location>
</feature>
<reference key="1">
    <citation type="submission" date="2005-01" db="EMBL/GenBank/DDBJ databases">
        <authorList>
            <consortium name="NIH - Xenopus Gene Collection (XGC) project"/>
        </authorList>
    </citation>
    <scope>NUCLEOTIDE SEQUENCE [LARGE SCALE MRNA]</scope>
    <source>
        <tissue>Egg</tissue>
    </source>
</reference>
<dbReference type="EC" id="2.8.2.5"/>
<dbReference type="EMBL" id="BC088957">
    <property type="protein sequence ID" value="AAH88957.1"/>
    <property type="molecule type" value="mRNA"/>
</dbReference>
<dbReference type="RefSeq" id="NP_001088975.1">
    <property type="nucleotide sequence ID" value="NM_001095506.1"/>
</dbReference>
<dbReference type="GlyCosmos" id="Q5XHM7">
    <property type="glycosylation" value="5 sites, No reported glycans"/>
</dbReference>
<dbReference type="DNASU" id="496355"/>
<dbReference type="GeneID" id="496355"/>
<dbReference type="KEGG" id="xla:496355"/>
<dbReference type="AGR" id="Xenbase:XB-GENE-1014622"/>
<dbReference type="CTD" id="496355"/>
<dbReference type="Xenbase" id="XB-GENE-1014622">
    <property type="gene designation" value="chst12.L"/>
</dbReference>
<dbReference type="OMA" id="TELEWIQ"/>
<dbReference type="OrthoDB" id="2019940at2759"/>
<dbReference type="Proteomes" id="UP000186698">
    <property type="component" value="Chromosome 9_10L"/>
</dbReference>
<dbReference type="Bgee" id="496355">
    <property type="expression patterns" value="Expressed in egg cell and 19 other cell types or tissues"/>
</dbReference>
<dbReference type="GO" id="GO:0000139">
    <property type="term" value="C:Golgi membrane"/>
    <property type="evidence" value="ECO:0007669"/>
    <property type="project" value="UniProtKB-SubCell"/>
</dbReference>
<dbReference type="GO" id="GO:0047756">
    <property type="term" value="F:chondroitin 4-sulfotransferase activity"/>
    <property type="evidence" value="ECO:0007669"/>
    <property type="project" value="UniProtKB-EC"/>
</dbReference>
<dbReference type="GO" id="GO:0008146">
    <property type="term" value="F:sulfotransferase activity"/>
    <property type="evidence" value="ECO:0000318"/>
    <property type="project" value="GO_Central"/>
</dbReference>
<dbReference type="GO" id="GO:0016051">
    <property type="term" value="P:carbohydrate biosynthetic process"/>
    <property type="evidence" value="ECO:0007669"/>
    <property type="project" value="InterPro"/>
</dbReference>
<dbReference type="GO" id="GO:0030166">
    <property type="term" value="P:proteoglycan biosynthetic process"/>
    <property type="evidence" value="ECO:0000318"/>
    <property type="project" value="GO_Central"/>
</dbReference>
<dbReference type="InterPro" id="IPR018011">
    <property type="entry name" value="Carb_sulfotrans_8-10"/>
</dbReference>
<dbReference type="InterPro" id="IPR005331">
    <property type="entry name" value="Sulfotransferase"/>
</dbReference>
<dbReference type="PANTHER" id="PTHR12137">
    <property type="entry name" value="CARBOHYDRATE SULFOTRANSFERASE"/>
    <property type="match status" value="1"/>
</dbReference>
<dbReference type="PANTHER" id="PTHR12137:SF4">
    <property type="entry name" value="CARBOHYDRATE SULFOTRANSFERASE 12"/>
    <property type="match status" value="1"/>
</dbReference>
<dbReference type="Pfam" id="PF03567">
    <property type="entry name" value="Sulfotransfer_2"/>
    <property type="match status" value="1"/>
</dbReference>
<sequence>MAKSRLFCLLVALGSVFMILFIIVYWDNVGTANLNLHTSFSKSLPFQSSEELSTAVTATRNRFVSDVDVFLNSFLNLSTRRSELQSTKAEKMPLRGSSSLEENARGYDWSTKEKLEDAILDQEMIQQERKLNLLQFCGNSSFGFPTKERSFDDIPNRELDHLIVDDRHGIIYCYVPKVACTNWKRVMIVLSESLLDKKGVPYQDPLLIPREDVHNTSSHLTFNKFWRRYGKFSRHMMKIKLKKYTKFLFVRDPFVRLISAFRSKFELENEDFYRSFAVPILTRFSNTTRVPDTVGEAFSSGTMPSFSQFIQYLLDPQTEEQKPFNEHWRQVYRLCHPCQIEYDFIGKLETLGEDTALLLRQLNLDTLFQFPPSYRNRTASSWEEDWYSKLPIAWRKKLYKLFEADFVLFGYPKPDDLLSV</sequence>